<proteinExistence type="inferred from homology"/>
<name>RL25_PSEPF</name>
<accession>Q3K6W3</accession>
<gene>
    <name evidence="1" type="primary">rplY</name>
    <name evidence="1" type="synonym">ctc</name>
    <name type="ordered locus">Pfl01_4754</name>
</gene>
<organism>
    <name type="scientific">Pseudomonas fluorescens (strain Pf0-1)</name>
    <dbReference type="NCBI Taxonomy" id="205922"/>
    <lineage>
        <taxon>Bacteria</taxon>
        <taxon>Pseudomonadati</taxon>
        <taxon>Pseudomonadota</taxon>
        <taxon>Gammaproteobacteria</taxon>
        <taxon>Pseudomonadales</taxon>
        <taxon>Pseudomonadaceae</taxon>
        <taxon>Pseudomonas</taxon>
    </lineage>
</organism>
<comment type="function">
    <text evidence="1">This is one of the proteins that binds to the 5S RNA in the ribosome where it forms part of the central protuberance.</text>
</comment>
<comment type="subunit">
    <text evidence="1">Part of the 50S ribosomal subunit; part of the 5S rRNA/L5/L18/L25 subcomplex. Contacts the 5S rRNA. Binds to the 5S rRNA independently of L5 and L18.</text>
</comment>
<comment type="similarity">
    <text evidence="1">Belongs to the bacterial ribosomal protein bL25 family. CTC subfamily.</text>
</comment>
<sequence>MNDFTLNAELRSDLGKGASRRLRRLAALVPAVVYGGDKAPESISMLAKEVAKLLENEAAYSHVIELNVGGTKQNVIIKALQRHPAKGHVMHADFVRVVAGQKLTAIVPVHFINEAAPVKKGGEISHVVAEIEVSCLPKDLPEFIEVDLANAEIGTIVHLSDIKAPKGVEFVALAHGDDKAVANVHAPRVAPEATEEGAAE</sequence>
<feature type="chain" id="PRO_0000244227" description="Large ribosomal subunit protein bL25">
    <location>
        <begin position="1"/>
        <end position="200"/>
    </location>
</feature>
<keyword id="KW-0687">Ribonucleoprotein</keyword>
<keyword id="KW-0689">Ribosomal protein</keyword>
<keyword id="KW-0694">RNA-binding</keyword>
<keyword id="KW-0699">rRNA-binding</keyword>
<dbReference type="EMBL" id="CP000094">
    <property type="protein sequence ID" value="ABA76491.1"/>
    <property type="molecule type" value="Genomic_DNA"/>
</dbReference>
<dbReference type="RefSeq" id="WP_011335926.1">
    <property type="nucleotide sequence ID" value="NC_007492.2"/>
</dbReference>
<dbReference type="SMR" id="Q3K6W3"/>
<dbReference type="KEGG" id="pfo:Pfl01_4754"/>
<dbReference type="eggNOG" id="COG1825">
    <property type="taxonomic scope" value="Bacteria"/>
</dbReference>
<dbReference type="HOGENOM" id="CLU_075939_0_1_6"/>
<dbReference type="Proteomes" id="UP000002704">
    <property type="component" value="Chromosome"/>
</dbReference>
<dbReference type="GO" id="GO:0022625">
    <property type="term" value="C:cytosolic large ribosomal subunit"/>
    <property type="evidence" value="ECO:0007669"/>
    <property type="project" value="TreeGrafter"/>
</dbReference>
<dbReference type="GO" id="GO:0008097">
    <property type="term" value="F:5S rRNA binding"/>
    <property type="evidence" value="ECO:0007669"/>
    <property type="project" value="InterPro"/>
</dbReference>
<dbReference type="GO" id="GO:0003735">
    <property type="term" value="F:structural constituent of ribosome"/>
    <property type="evidence" value="ECO:0007669"/>
    <property type="project" value="InterPro"/>
</dbReference>
<dbReference type="GO" id="GO:0006412">
    <property type="term" value="P:translation"/>
    <property type="evidence" value="ECO:0007669"/>
    <property type="project" value="UniProtKB-UniRule"/>
</dbReference>
<dbReference type="CDD" id="cd00495">
    <property type="entry name" value="Ribosomal_L25_TL5_CTC"/>
    <property type="match status" value="1"/>
</dbReference>
<dbReference type="Gene3D" id="2.170.120.20">
    <property type="entry name" value="Ribosomal protein L25, beta domain"/>
    <property type="match status" value="1"/>
</dbReference>
<dbReference type="Gene3D" id="2.40.240.10">
    <property type="entry name" value="Ribosomal Protein L25, Chain P"/>
    <property type="match status" value="1"/>
</dbReference>
<dbReference type="HAMAP" id="MF_01334">
    <property type="entry name" value="Ribosomal_bL25_CTC"/>
    <property type="match status" value="1"/>
</dbReference>
<dbReference type="InterPro" id="IPR020056">
    <property type="entry name" value="Rbsml_bL25/Gln-tRNA_synth_N"/>
</dbReference>
<dbReference type="InterPro" id="IPR011035">
    <property type="entry name" value="Ribosomal_bL25/Gln-tRNA_synth"/>
</dbReference>
<dbReference type="InterPro" id="IPR020057">
    <property type="entry name" value="Ribosomal_bL25_b-dom"/>
</dbReference>
<dbReference type="InterPro" id="IPR037121">
    <property type="entry name" value="Ribosomal_bL25_C"/>
</dbReference>
<dbReference type="InterPro" id="IPR001021">
    <property type="entry name" value="Ribosomal_bL25_long"/>
</dbReference>
<dbReference type="InterPro" id="IPR029751">
    <property type="entry name" value="Ribosomal_L25_dom"/>
</dbReference>
<dbReference type="InterPro" id="IPR020930">
    <property type="entry name" value="Ribosomal_uL5_bac-type"/>
</dbReference>
<dbReference type="NCBIfam" id="TIGR00731">
    <property type="entry name" value="bL25_bact_ctc"/>
    <property type="match status" value="1"/>
</dbReference>
<dbReference type="NCBIfam" id="NF004128">
    <property type="entry name" value="PRK05618.1-2"/>
    <property type="match status" value="1"/>
</dbReference>
<dbReference type="NCBIfam" id="NF004130">
    <property type="entry name" value="PRK05618.1-5"/>
    <property type="match status" value="1"/>
</dbReference>
<dbReference type="NCBIfam" id="NF004612">
    <property type="entry name" value="PRK05943.1"/>
    <property type="match status" value="1"/>
</dbReference>
<dbReference type="PANTHER" id="PTHR33284">
    <property type="entry name" value="RIBOSOMAL PROTEIN L25/GLN-TRNA SYNTHETASE, ANTI-CODON-BINDING DOMAIN-CONTAINING PROTEIN"/>
    <property type="match status" value="1"/>
</dbReference>
<dbReference type="PANTHER" id="PTHR33284:SF1">
    <property type="entry name" value="RIBOSOMAL PROTEIN L25_GLN-TRNA SYNTHETASE, ANTI-CODON-BINDING DOMAIN-CONTAINING PROTEIN"/>
    <property type="match status" value="1"/>
</dbReference>
<dbReference type="Pfam" id="PF01386">
    <property type="entry name" value="Ribosomal_L25p"/>
    <property type="match status" value="1"/>
</dbReference>
<dbReference type="Pfam" id="PF14693">
    <property type="entry name" value="Ribosomal_TL5_C"/>
    <property type="match status" value="1"/>
</dbReference>
<dbReference type="SUPFAM" id="SSF50715">
    <property type="entry name" value="Ribosomal protein L25-like"/>
    <property type="match status" value="1"/>
</dbReference>
<protein>
    <recommendedName>
        <fullName evidence="1">Large ribosomal subunit protein bL25</fullName>
    </recommendedName>
    <alternativeName>
        <fullName evidence="2">50S ribosomal protein L25</fullName>
    </alternativeName>
    <alternativeName>
        <fullName evidence="1">General stress protein CTC</fullName>
    </alternativeName>
</protein>
<evidence type="ECO:0000255" key="1">
    <source>
        <dbReference type="HAMAP-Rule" id="MF_01334"/>
    </source>
</evidence>
<evidence type="ECO:0000305" key="2"/>
<reference key="1">
    <citation type="journal article" date="2009" name="Genome Biol.">
        <title>Genomic and genetic analyses of diversity and plant interactions of Pseudomonas fluorescens.</title>
        <authorList>
            <person name="Silby M.W."/>
            <person name="Cerdeno-Tarraga A.M."/>
            <person name="Vernikos G.S."/>
            <person name="Giddens S.R."/>
            <person name="Jackson R.W."/>
            <person name="Preston G.M."/>
            <person name="Zhang X.-X."/>
            <person name="Moon C.D."/>
            <person name="Gehrig S.M."/>
            <person name="Godfrey S.A.C."/>
            <person name="Knight C.G."/>
            <person name="Malone J.G."/>
            <person name="Robinson Z."/>
            <person name="Spiers A.J."/>
            <person name="Harris S."/>
            <person name="Challis G.L."/>
            <person name="Yaxley A.M."/>
            <person name="Harris D."/>
            <person name="Seeger K."/>
            <person name="Murphy L."/>
            <person name="Rutter S."/>
            <person name="Squares R."/>
            <person name="Quail M.A."/>
            <person name="Saunders E."/>
            <person name="Mavromatis K."/>
            <person name="Brettin T.S."/>
            <person name="Bentley S.D."/>
            <person name="Hothersall J."/>
            <person name="Stephens E."/>
            <person name="Thomas C.M."/>
            <person name="Parkhill J."/>
            <person name="Levy S.B."/>
            <person name="Rainey P.B."/>
            <person name="Thomson N.R."/>
        </authorList>
    </citation>
    <scope>NUCLEOTIDE SEQUENCE [LARGE SCALE GENOMIC DNA]</scope>
    <source>
        <strain>Pf0-1</strain>
    </source>
</reference>